<sequence length="443" mass="47968">MEVTADQPRWVSHHHPAVLNGQHPDTHHPGLGHSYMEAQYPLTEEVDVLFNIDGQGNHVPSYYGNSVRATVQRYPPTHHGSQVCRPPLLHGSLPWLDGGKALSSHHTASPWNLSPFSKTSIHHGSPGPLSVYPPASSSSLAAGHSSPHLFTFPPTPPKDVSPDPSLSTPGSAGSARQDEKECLKYQVQLPDSMKLETSHSRGSMTTLGGASSSAHHPITTYPPYVPEYSSGLFPPSSLLGGSPTGFGCKSRPKARSSTEGRECVNCGATSTPLWRRDGTGHYLCNACGLYHKMNGQNRPLIKPKRRLSAARRAGTSCANCQTTTTTLWRRNANGDPVCNACGLYYKLHNINRPLTMKKEGIQTRNRKMSSKSKKCKKVHDALEDFPKSSSFNPAALSRHMSSLSHISPFSHSSHMLTTPTPMHPPSGLSFGPHHPSSMVTAMG</sequence>
<reference key="1">
    <citation type="journal article" date="1991" name="Mol. Cell. Biol.">
        <title>Murine and human T-lymphocyte GATA-3 factors mediate transcription through a cis-regulatory element within the human T-cell receptor delta gene enhancer.</title>
        <authorList>
            <person name="Ko L.J."/>
            <person name="Yamamoto M."/>
            <person name="Leonard M.W."/>
            <person name="George K.M."/>
            <person name="Ting P."/>
            <person name="Engel J.D."/>
        </authorList>
    </citation>
    <scope>NUCLEOTIDE SEQUENCE [MRNA]</scope>
</reference>
<reference key="2">
    <citation type="journal article" date="2004" name="Genome Res.">
        <title>The status, quality, and expansion of the NIH full-length cDNA project: the Mammalian Gene Collection (MGC).</title>
        <authorList>
            <consortium name="The MGC Project Team"/>
        </authorList>
    </citation>
    <scope>NUCLEOTIDE SEQUENCE [LARGE SCALE MRNA]</scope>
    <source>
        <strain>C57BL/6J</strain>
        <tissue>Brain</tissue>
    </source>
</reference>
<reference key="3">
    <citation type="journal article" date="2005" name="Science">
        <title>T helper cell fate specified by kinase-mediated interaction of T-bet with GATA-3.</title>
        <authorList>
            <person name="Hwang E.S."/>
            <person name="Szabo S.J."/>
            <person name="Schwartzberg P.L."/>
            <person name="Glimcher L.H."/>
        </authorList>
    </citation>
    <scope>INTERACTION WITH TBX21</scope>
    <scope>SUBCELLULAR LOCATION</scope>
</reference>
<reference key="4">
    <citation type="journal article" date="2006" name="J. Immunol.">
        <title>Critical YxKxHxxxRP motif in the C-terminal region of GATA3 for its DNA binding and function.</title>
        <authorList>
            <person name="Shinnakasu R."/>
            <person name="Yamashita M."/>
            <person name="Shinoda K."/>
            <person name="Endo Y."/>
            <person name="Hosokawa H."/>
            <person name="Hasegawa A."/>
            <person name="Ikemizu S."/>
            <person name="Nakayama T."/>
        </authorList>
    </citation>
    <scope>FUNCTION</scope>
    <scope>YXKXHXXXRP MOTIF</scope>
    <scope>MUTAGENESIS OF TYR-344; LYS-346; HIS-348; ARG-352 AND PRO-353</scope>
</reference>
<reference key="5">
    <citation type="journal article" date="2010" name="Cell">
        <title>A tissue-specific atlas of mouse protein phosphorylation and expression.</title>
        <authorList>
            <person name="Huttlin E.L."/>
            <person name="Jedrychowski M.P."/>
            <person name="Elias J.E."/>
            <person name="Goswami T."/>
            <person name="Rad R."/>
            <person name="Beausoleil S.A."/>
            <person name="Villen J."/>
            <person name="Haas W."/>
            <person name="Sowa M.E."/>
            <person name="Gygi S.P."/>
        </authorList>
    </citation>
    <scope>PHOSPHORYLATION [LARGE SCALE ANALYSIS] AT SER-161</scope>
    <scope>IDENTIFICATION BY MASS SPECTROMETRY [LARGE SCALE ANALYSIS]</scope>
    <source>
        <tissue>Lung</tissue>
    </source>
</reference>
<reference key="6">
    <citation type="journal article" date="2011" name="Mol. Cell. Biol.">
        <title>c-Abl-mediated tyrosine phosphorylation of the T-bet DNA-binding domain regulates CD4+ T-cell differentiation and allergic lung inflammation.</title>
        <authorList>
            <person name="Chen A."/>
            <person name="Lee S.M."/>
            <person name="Gao B."/>
            <person name="Shannon S."/>
            <person name="Zhu Z."/>
            <person name="Fang D."/>
        </authorList>
    </citation>
    <scope>INTERACTION WITH TBX21</scope>
</reference>
<reference key="7">
    <citation type="journal article" date="2013" name="J. Immunol.">
        <title>Lysine 313 of T-box is crucial for modulation of protein stability, DNA binding, and threonine phosphorylation of T-bet.</title>
        <authorList>
            <person name="Jang E.J."/>
            <person name="Park H.R."/>
            <person name="Hong J.H."/>
            <person name="Hwang E.S."/>
        </authorList>
    </citation>
    <scope>INTERACTION WITH TBX21</scope>
</reference>
<reference key="8">
    <citation type="journal article" date="2019" name="Cancer Immunol. Res.">
        <title>The E3 Ubiquitin Ligase Asb2alpha in T Helper 2 Cells Negatively Regulates Antitumor Immunity in Colorectal Cancer.</title>
        <authorList>
            <person name="Spinner C.A."/>
            <person name="Lamsoul I."/>
            <person name="Metais A."/>
            <person name="Febrissy C."/>
            <person name="Moog-Lutz C."/>
            <person name="Lutz P.G."/>
        </authorList>
    </citation>
    <scope>FUNCTION</scope>
</reference>
<reference key="9">
    <citation type="journal article" date="2021" name="Immunity">
        <title>IL-33-induced metabolic reprogramming controls the differentiation of alternatively activated macrophages and the resolution of inflammation.</title>
        <authorList>
            <person name="Faas M."/>
            <person name="Ipseiz N."/>
            <person name="Ackermann J."/>
            <person name="Culemann S."/>
            <person name="Grueneboom A."/>
            <person name="Schroeder F."/>
            <person name="Rothe T."/>
            <person name="Scholtysek C."/>
            <person name="Eberhardt M."/>
            <person name="Boettcher M."/>
            <person name="Kirchner P."/>
            <person name="Stoll C."/>
            <person name="Ekici A."/>
            <person name="Fuchs M."/>
            <person name="Kunz M."/>
            <person name="Weigmann B."/>
            <person name="Wirtz S."/>
            <person name="Lang R."/>
            <person name="Hofmann J."/>
            <person name="Vera J."/>
            <person name="Voehringer D."/>
            <person name="Michelucci A."/>
            <person name="Mougiakakos D."/>
            <person name="Uderhardt S."/>
            <person name="Schett G."/>
            <person name="Kroenke G."/>
        </authorList>
    </citation>
    <scope>FUNCTION</scope>
    <scope>SUBCELLULAR LOCATION</scope>
    <scope>INDUCTION BY IL33</scope>
</reference>
<reference key="10">
    <citation type="journal article" date="2008" name="J. Mol. Biol.">
        <title>Crystal structures of multiple GATA zinc fingers bound to DNA reveal new insights into DNA recognition and self-association by GATA.</title>
        <authorList>
            <person name="Bates D.L."/>
            <person name="Chen Y."/>
            <person name="Kim G."/>
            <person name="Guo L."/>
            <person name="Chen L."/>
        </authorList>
    </citation>
    <scope>X-RAY CRYSTALLOGRAPHY (2.7 ANGSTROMS) OF 308-370 IN COMPLEX WITH DNA</scope>
    <scope>DOMAIN</scope>
</reference>
<proteinExistence type="evidence at protein level"/>
<gene>
    <name type="primary">Gata3</name>
    <name type="synonym">Gata-3</name>
</gene>
<evidence type="ECO:0000250" key="1"/>
<evidence type="ECO:0000250" key="2">
    <source>
        <dbReference type="UniProtKB" id="P23771"/>
    </source>
</evidence>
<evidence type="ECO:0000255" key="3">
    <source>
        <dbReference type="PROSITE-ProRule" id="PRU00094"/>
    </source>
</evidence>
<evidence type="ECO:0000256" key="4">
    <source>
        <dbReference type="SAM" id="MobiDB-lite"/>
    </source>
</evidence>
<evidence type="ECO:0000269" key="5">
    <source>
    </source>
</evidence>
<evidence type="ECO:0000269" key="6">
    <source>
    </source>
</evidence>
<evidence type="ECO:0000269" key="7">
    <source>
    </source>
</evidence>
<evidence type="ECO:0000269" key="8">
    <source>
    </source>
</evidence>
<evidence type="ECO:0000269" key="9">
    <source>
    </source>
</evidence>
<evidence type="ECO:0000269" key="10">
    <source>
    </source>
</evidence>
<evidence type="ECO:0000269" key="11">
    <source>
    </source>
</evidence>
<evidence type="ECO:0007744" key="12">
    <source>
    </source>
</evidence>
<evidence type="ECO:0007829" key="13">
    <source>
        <dbReference type="PDB" id="3DFV"/>
    </source>
</evidence>
<evidence type="ECO:0007829" key="14">
    <source>
        <dbReference type="PDB" id="3DFX"/>
    </source>
</evidence>
<organism>
    <name type="scientific">Mus musculus</name>
    <name type="common">Mouse</name>
    <dbReference type="NCBI Taxonomy" id="10090"/>
    <lineage>
        <taxon>Eukaryota</taxon>
        <taxon>Metazoa</taxon>
        <taxon>Chordata</taxon>
        <taxon>Craniata</taxon>
        <taxon>Vertebrata</taxon>
        <taxon>Euteleostomi</taxon>
        <taxon>Mammalia</taxon>
        <taxon>Eutheria</taxon>
        <taxon>Euarchontoglires</taxon>
        <taxon>Glires</taxon>
        <taxon>Rodentia</taxon>
        <taxon>Myomorpha</taxon>
        <taxon>Muroidea</taxon>
        <taxon>Muridae</taxon>
        <taxon>Murinae</taxon>
        <taxon>Mus</taxon>
        <taxon>Mus</taxon>
    </lineage>
</organism>
<accession>P23772</accession>
<protein>
    <recommendedName>
        <fullName>Trans-acting T-cell-specific transcription factor GATA-3</fullName>
    </recommendedName>
    <alternativeName>
        <fullName>GATA-binding factor 3</fullName>
    </alternativeName>
</protein>
<keyword id="KW-0002">3D-structure</keyword>
<keyword id="KW-0010">Activator</keyword>
<keyword id="KW-0238">DNA-binding</keyword>
<keyword id="KW-0391">Immunity</keyword>
<keyword id="KW-0399">Innate immunity</keyword>
<keyword id="KW-0479">Metal-binding</keyword>
<keyword id="KW-0539">Nucleus</keyword>
<keyword id="KW-0597">Phosphoprotein</keyword>
<keyword id="KW-1185">Reference proteome</keyword>
<keyword id="KW-0677">Repeat</keyword>
<keyword id="KW-0804">Transcription</keyword>
<keyword id="KW-0805">Transcription regulation</keyword>
<keyword id="KW-0862">Zinc</keyword>
<keyword id="KW-0863">Zinc-finger</keyword>
<name>GATA3_MOUSE</name>
<dbReference type="EMBL" id="X55123">
    <property type="protein sequence ID" value="CAA38917.1"/>
    <property type="molecule type" value="mRNA"/>
</dbReference>
<dbReference type="EMBL" id="BC062915">
    <property type="protein sequence ID" value="AAH62915.1"/>
    <property type="molecule type" value="mRNA"/>
</dbReference>
<dbReference type="CCDS" id="CCDS15674.1"/>
<dbReference type="PIR" id="B39794">
    <property type="entry name" value="B39794"/>
</dbReference>
<dbReference type="RefSeq" id="NP_001403975.1">
    <property type="nucleotide sequence ID" value="NM_001417046.1"/>
</dbReference>
<dbReference type="RefSeq" id="NP_001403977.1">
    <property type="nucleotide sequence ID" value="NM_001417048.1"/>
</dbReference>
<dbReference type="RefSeq" id="NP_001403978.1">
    <property type="nucleotide sequence ID" value="NM_001417049.1"/>
</dbReference>
<dbReference type="RefSeq" id="NP_001403979.1">
    <property type="nucleotide sequence ID" value="NM_001417050.1"/>
</dbReference>
<dbReference type="RefSeq" id="NP_001403980.1">
    <property type="nucleotide sequence ID" value="NM_001417051.1"/>
</dbReference>
<dbReference type="RefSeq" id="NP_032117.1">
    <property type="nucleotide sequence ID" value="NM_008091.4"/>
</dbReference>
<dbReference type="RefSeq" id="XP_006497417.1">
    <property type="nucleotide sequence ID" value="XM_006497354.1"/>
</dbReference>
<dbReference type="PDB" id="3DFV">
    <property type="method" value="X-ray"/>
    <property type="resolution" value="3.10 A"/>
    <property type="chains" value="C/D=308-370"/>
</dbReference>
<dbReference type="PDB" id="3DFX">
    <property type="method" value="X-ray"/>
    <property type="resolution" value="2.70 A"/>
    <property type="chains" value="A/B=308-370"/>
</dbReference>
<dbReference type="PDBsum" id="3DFV"/>
<dbReference type="PDBsum" id="3DFX"/>
<dbReference type="SMR" id="P23772"/>
<dbReference type="BioGRID" id="199840">
    <property type="interactions" value="9"/>
</dbReference>
<dbReference type="DIP" id="DIP-29712N"/>
<dbReference type="FunCoup" id="P23772">
    <property type="interactions" value="1620"/>
</dbReference>
<dbReference type="IntAct" id="P23772">
    <property type="interactions" value="4"/>
</dbReference>
<dbReference type="STRING" id="10090.ENSMUSP00000100041"/>
<dbReference type="GlyGen" id="P23772">
    <property type="glycosylation" value="2 sites"/>
</dbReference>
<dbReference type="iPTMnet" id="P23772"/>
<dbReference type="PhosphoSitePlus" id="P23772"/>
<dbReference type="jPOST" id="P23772"/>
<dbReference type="PaxDb" id="10090-ENSMUSP00000100041"/>
<dbReference type="ProteomicsDB" id="271635"/>
<dbReference type="Antibodypedia" id="11113">
    <property type="antibodies" value="1144 antibodies from 49 providers"/>
</dbReference>
<dbReference type="DNASU" id="14462"/>
<dbReference type="Ensembl" id="ENSMUST00000102976.4">
    <property type="protein sequence ID" value="ENSMUSP00000100041.4"/>
    <property type="gene ID" value="ENSMUSG00000015619.11"/>
</dbReference>
<dbReference type="GeneID" id="14462"/>
<dbReference type="KEGG" id="mmu:14462"/>
<dbReference type="UCSC" id="uc008ihf.1">
    <property type="organism name" value="mouse"/>
</dbReference>
<dbReference type="AGR" id="MGI:95663"/>
<dbReference type="CTD" id="2625"/>
<dbReference type="MGI" id="MGI:95663">
    <property type="gene designation" value="Gata3"/>
</dbReference>
<dbReference type="VEuPathDB" id="HostDB:ENSMUSG00000015619"/>
<dbReference type="eggNOG" id="KOG1601">
    <property type="taxonomic scope" value="Eukaryota"/>
</dbReference>
<dbReference type="GeneTree" id="ENSGT00940000159247"/>
<dbReference type="HOGENOM" id="CLU_027524_1_0_1"/>
<dbReference type="InParanoid" id="P23772"/>
<dbReference type="OMA" id="ECVKYQV"/>
<dbReference type="OrthoDB" id="2162994at2759"/>
<dbReference type="PhylomeDB" id="P23772"/>
<dbReference type="TreeFam" id="TF315391"/>
<dbReference type="Reactome" id="R-MMU-5689880">
    <property type="pathway name" value="Ub-specific processing proteases"/>
</dbReference>
<dbReference type="Reactome" id="R-MMU-8939236">
    <property type="pathway name" value="RUNX1 regulates transcription of genes involved in differentiation of HSCs"/>
</dbReference>
<dbReference type="Reactome" id="R-MMU-9018519">
    <property type="pathway name" value="Estrogen-dependent gene expression"/>
</dbReference>
<dbReference type="Reactome" id="R-MMU-983231">
    <property type="pathway name" value="Factors involved in megakaryocyte development and platelet production"/>
</dbReference>
<dbReference type="BioGRID-ORCS" id="14462">
    <property type="hits" value="2 hits in 82 CRISPR screens"/>
</dbReference>
<dbReference type="CD-CODE" id="3521A8E2">
    <property type="entry name" value="Synthetic Condensate 000312"/>
</dbReference>
<dbReference type="CD-CODE" id="D9A36668">
    <property type="entry name" value="Transcriptional condensate"/>
</dbReference>
<dbReference type="ChiTaRS" id="Gata3">
    <property type="organism name" value="mouse"/>
</dbReference>
<dbReference type="EvolutionaryTrace" id="P23772"/>
<dbReference type="PRO" id="PR:P23772"/>
<dbReference type="Proteomes" id="UP000000589">
    <property type="component" value="Chromosome 2"/>
</dbReference>
<dbReference type="RNAct" id="P23772">
    <property type="molecule type" value="protein"/>
</dbReference>
<dbReference type="Bgee" id="ENSMUSG00000015619">
    <property type="expression patterns" value="Expressed in urinary bladder urothelium and 217 other cell types or tissues"/>
</dbReference>
<dbReference type="ExpressionAtlas" id="P23772">
    <property type="expression patterns" value="baseline and differential"/>
</dbReference>
<dbReference type="GO" id="GO:0000785">
    <property type="term" value="C:chromatin"/>
    <property type="evidence" value="ECO:0007669"/>
    <property type="project" value="Ensembl"/>
</dbReference>
<dbReference type="GO" id="GO:0005654">
    <property type="term" value="C:nucleoplasm"/>
    <property type="evidence" value="ECO:0000304"/>
    <property type="project" value="Reactome"/>
</dbReference>
<dbReference type="GO" id="GO:0005634">
    <property type="term" value="C:nucleus"/>
    <property type="evidence" value="ECO:0000314"/>
    <property type="project" value="UniProtKB"/>
</dbReference>
<dbReference type="GO" id="GO:0000987">
    <property type="term" value="F:cis-regulatory region sequence-specific DNA binding"/>
    <property type="evidence" value="ECO:0000314"/>
    <property type="project" value="UniProtKB"/>
</dbReference>
<dbReference type="GO" id="GO:0001228">
    <property type="term" value="F:DNA-binding transcription activator activity, RNA polymerase II-specific"/>
    <property type="evidence" value="ECO:0000314"/>
    <property type="project" value="GO_Central"/>
</dbReference>
<dbReference type="GO" id="GO:0003700">
    <property type="term" value="F:DNA-binding transcription factor activity"/>
    <property type="evidence" value="ECO:0000314"/>
    <property type="project" value="MGI"/>
</dbReference>
<dbReference type="GO" id="GO:0000981">
    <property type="term" value="F:DNA-binding transcription factor activity, RNA polymerase II-specific"/>
    <property type="evidence" value="ECO:0000250"/>
    <property type="project" value="UniProtKB"/>
</dbReference>
<dbReference type="GO" id="GO:0001227">
    <property type="term" value="F:DNA-binding transcription repressor activity, RNA polymerase II-specific"/>
    <property type="evidence" value="ECO:0000250"/>
    <property type="project" value="UniProtKB"/>
</dbReference>
<dbReference type="GO" id="GO:0070888">
    <property type="term" value="F:E-box binding"/>
    <property type="evidence" value="ECO:0000250"/>
    <property type="project" value="UniProtKB"/>
</dbReference>
<dbReference type="GO" id="GO:1990226">
    <property type="term" value="F:histone methyltransferase binding"/>
    <property type="evidence" value="ECO:0007669"/>
    <property type="project" value="Ensembl"/>
</dbReference>
<dbReference type="GO" id="GO:0071837">
    <property type="term" value="F:HMG box domain binding"/>
    <property type="evidence" value="ECO:0007669"/>
    <property type="project" value="Ensembl"/>
</dbReference>
<dbReference type="GO" id="GO:0042802">
    <property type="term" value="F:identical protein binding"/>
    <property type="evidence" value="ECO:0000353"/>
    <property type="project" value="MGI"/>
</dbReference>
<dbReference type="GO" id="GO:0005134">
    <property type="term" value="F:interleukin-2 receptor binding"/>
    <property type="evidence" value="ECO:0000353"/>
    <property type="project" value="MGI"/>
</dbReference>
<dbReference type="GO" id="GO:0000978">
    <property type="term" value="F:RNA polymerase II cis-regulatory region sequence-specific DNA binding"/>
    <property type="evidence" value="ECO:0000314"/>
    <property type="project" value="GO_Central"/>
</dbReference>
<dbReference type="GO" id="GO:0000977">
    <property type="term" value="F:RNA polymerase II transcription regulatory region sequence-specific DNA binding"/>
    <property type="evidence" value="ECO:0000314"/>
    <property type="project" value="MGI"/>
</dbReference>
<dbReference type="GO" id="GO:0061629">
    <property type="term" value="F:RNA polymerase II-specific DNA-binding transcription factor binding"/>
    <property type="evidence" value="ECO:0007669"/>
    <property type="project" value="Ensembl"/>
</dbReference>
<dbReference type="GO" id="GO:0043565">
    <property type="term" value="F:sequence-specific DNA binding"/>
    <property type="evidence" value="ECO:0000314"/>
    <property type="project" value="MGI"/>
</dbReference>
<dbReference type="GO" id="GO:0001223">
    <property type="term" value="F:transcription coactivator binding"/>
    <property type="evidence" value="ECO:0000353"/>
    <property type="project" value="BHF-UCL"/>
</dbReference>
<dbReference type="GO" id="GO:0008270">
    <property type="term" value="F:zinc ion binding"/>
    <property type="evidence" value="ECO:0007669"/>
    <property type="project" value="UniProtKB-KW"/>
</dbReference>
<dbReference type="GO" id="GO:0048646">
    <property type="term" value="P:anatomical structure formation involved in morphogenesis"/>
    <property type="evidence" value="ECO:0000315"/>
    <property type="project" value="MGI"/>
</dbReference>
<dbReference type="GO" id="GO:0003180">
    <property type="term" value="P:aortic valve morphogenesis"/>
    <property type="evidence" value="ECO:0000315"/>
    <property type="project" value="UniProtKB"/>
</dbReference>
<dbReference type="GO" id="GO:0007411">
    <property type="term" value="P:axon guidance"/>
    <property type="evidence" value="ECO:0000315"/>
    <property type="project" value="MGI"/>
</dbReference>
<dbReference type="GO" id="GO:0060070">
    <property type="term" value="P:canonical Wnt signaling pathway"/>
    <property type="evidence" value="ECO:0000315"/>
    <property type="project" value="UniProtKB"/>
</dbReference>
<dbReference type="GO" id="GO:0003215">
    <property type="term" value="P:cardiac right ventricle morphogenesis"/>
    <property type="evidence" value="ECO:0000315"/>
    <property type="project" value="UniProtKB"/>
</dbReference>
<dbReference type="GO" id="GO:0051216">
    <property type="term" value="P:cartilage development"/>
    <property type="evidence" value="ECO:0000315"/>
    <property type="project" value="MGI"/>
</dbReference>
<dbReference type="GO" id="GO:0001775">
    <property type="term" value="P:cell activation"/>
    <property type="evidence" value="ECO:0000315"/>
    <property type="project" value="MGI"/>
</dbReference>
<dbReference type="GO" id="GO:0001709">
    <property type="term" value="P:cell fate determination"/>
    <property type="evidence" value="ECO:0000314"/>
    <property type="project" value="MGI"/>
</dbReference>
<dbReference type="GO" id="GO:0048469">
    <property type="term" value="P:cell maturation"/>
    <property type="evidence" value="ECO:0000315"/>
    <property type="project" value="MGI"/>
</dbReference>
<dbReference type="GO" id="GO:0000902">
    <property type="term" value="P:cell morphogenesis"/>
    <property type="evidence" value="ECO:0000315"/>
    <property type="project" value="MGI"/>
</dbReference>
<dbReference type="GO" id="GO:0008283">
    <property type="term" value="P:cell population proliferation"/>
    <property type="evidence" value="ECO:0000315"/>
    <property type="project" value="MGI"/>
</dbReference>
<dbReference type="GO" id="GO:0071773">
    <property type="term" value="P:cellular response to BMP stimulus"/>
    <property type="evidence" value="ECO:0000314"/>
    <property type="project" value="MGI"/>
</dbReference>
<dbReference type="GO" id="GO:0071345">
    <property type="term" value="P:cellular response to cytokine stimulus"/>
    <property type="evidence" value="ECO:0000314"/>
    <property type="project" value="MGI"/>
</dbReference>
<dbReference type="GO" id="GO:0035457">
    <property type="term" value="P:cellular response to interferon-alpha"/>
    <property type="evidence" value="ECO:0007669"/>
    <property type="project" value="Ensembl"/>
</dbReference>
<dbReference type="GO" id="GO:0071353">
    <property type="term" value="P:cellular response to interleukin-4"/>
    <property type="evidence" value="ECO:0000314"/>
    <property type="project" value="MGI"/>
</dbReference>
<dbReference type="GO" id="GO:0071356">
    <property type="term" value="P:cellular response to tumor necrosis factor"/>
    <property type="evidence" value="ECO:0007669"/>
    <property type="project" value="Ensembl"/>
</dbReference>
<dbReference type="GO" id="GO:0006338">
    <property type="term" value="P:chromatin remodeling"/>
    <property type="evidence" value="ECO:0000314"/>
    <property type="project" value="MGI"/>
</dbReference>
<dbReference type="GO" id="GO:0090102">
    <property type="term" value="P:cochlea development"/>
    <property type="evidence" value="ECO:0007669"/>
    <property type="project" value="Ensembl"/>
</dbReference>
<dbReference type="GO" id="GO:0048589">
    <property type="term" value="P:developmental growth"/>
    <property type="evidence" value="ECO:0000315"/>
    <property type="project" value="MGI"/>
</dbReference>
<dbReference type="GO" id="GO:0043583">
    <property type="term" value="P:ear development"/>
    <property type="evidence" value="ECO:0000250"/>
    <property type="project" value="UniProtKB"/>
</dbReference>
<dbReference type="GO" id="GO:0035162">
    <property type="term" value="P:embryonic hemopoiesis"/>
    <property type="evidence" value="ECO:0000315"/>
    <property type="project" value="MGI"/>
</dbReference>
<dbReference type="GO" id="GO:0048568">
    <property type="term" value="P:embryonic organ development"/>
    <property type="evidence" value="ECO:0000315"/>
    <property type="project" value="MGI"/>
</dbReference>
<dbReference type="GO" id="GO:0030218">
    <property type="term" value="P:erythrocyte differentiation"/>
    <property type="evidence" value="ECO:0000314"/>
    <property type="project" value="MGI"/>
</dbReference>
<dbReference type="GO" id="GO:0010467">
    <property type="term" value="P:gene expression"/>
    <property type="evidence" value="ECO:0000315"/>
    <property type="project" value="MGI"/>
</dbReference>
<dbReference type="GO" id="GO:0048872">
    <property type="term" value="P:homeostasis of number of cells"/>
    <property type="evidence" value="ECO:0000315"/>
    <property type="project" value="MGI"/>
</dbReference>
<dbReference type="GO" id="GO:0006959">
    <property type="term" value="P:humoral immune response"/>
    <property type="evidence" value="ECO:0000315"/>
    <property type="project" value="MGI"/>
</dbReference>
<dbReference type="GO" id="GO:0001701">
    <property type="term" value="P:in utero embryonic development"/>
    <property type="evidence" value="ECO:0000315"/>
    <property type="project" value="MGI"/>
</dbReference>
<dbReference type="GO" id="GO:0006954">
    <property type="term" value="P:inflammatory response"/>
    <property type="evidence" value="ECO:0000315"/>
    <property type="project" value="UniProtKB"/>
</dbReference>
<dbReference type="GO" id="GO:0045087">
    <property type="term" value="P:innate immune response"/>
    <property type="evidence" value="ECO:0007669"/>
    <property type="project" value="UniProtKB-KW"/>
</dbReference>
<dbReference type="GO" id="GO:0042472">
    <property type="term" value="P:inner ear morphogenesis"/>
    <property type="evidence" value="ECO:0000315"/>
    <property type="project" value="MGI"/>
</dbReference>
<dbReference type="GO" id="GO:0002088">
    <property type="term" value="P:lens development in camera-type eye"/>
    <property type="evidence" value="ECO:0000315"/>
    <property type="project" value="MGI"/>
</dbReference>
<dbReference type="GO" id="GO:0072676">
    <property type="term" value="P:lymphocyte migration"/>
    <property type="evidence" value="ECO:0000250"/>
    <property type="project" value="UniProtKB"/>
</dbReference>
<dbReference type="GO" id="GO:0030225">
    <property type="term" value="P:macrophage differentiation"/>
    <property type="evidence" value="ECO:0000315"/>
    <property type="project" value="UniProtKB"/>
</dbReference>
<dbReference type="GO" id="GO:0008584">
    <property type="term" value="P:male gonad development"/>
    <property type="evidence" value="ECO:0000315"/>
    <property type="project" value="UniProtKB"/>
</dbReference>
<dbReference type="GO" id="GO:0060374">
    <property type="term" value="P:mast cell differentiation"/>
    <property type="evidence" value="ECO:0000314"/>
    <property type="project" value="MGI"/>
</dbReference>
<dbReference type="GO" id="GO:0060231">
    <property type="term" value="P:mesenchymal to epithelial transition"/>
    <property type="evidence" value="ECO:0000250"/>
    <property type="project" value="UniProtKB"/>
</dbReference>
<dbReference type="GO" id="GO:0001823">
    <property type="term" value="P:mesonephros development"/>
    <property type="evidence" value="ECO:0000315"/>
    <property type="project" value="MGI"/>
</dbReference>
<dbReference type="GO" id="GO:0045786">
    <property type="term" value="P:negative regulation of cell cycle"/>
    <property type="evidence" value="ECO:0000315"/>
    <property type="project" value="MGI"/>
</dbReference>
<dbReference type="GO" id="GO:2000146">
    <property type="term" value="P:negative regulation of cell motility"/>
    <property type="evidence" value="ECO:0000250"/>
    <property type="project" value="UniProtKB"/>
</dbReference>
<dbReference type="GO" id="GO:0008285">
    <property type="term" value="P:negative regulation of cell population proliferation"/>
    <property type="evidence" value="ECO:0000315"/>
    <property type="project" value="MGI"/>
</dbReference>
<dbReference type="GO" id="GO:2000607">
    <property type="term" value="P:negative regulation of cell proliferation involved in mesonephros development"/>
    <property type="evidence" value="ECO:0000315"/>
    <property type="project" value="UniProtKB"/>
</dbReference>
<dbReference type="GO" id="GO:0045892">
    <property type="term" value="P:negative regulation of DNA-templated transcription"/>
    <property type="evidence" value="ECO:0000250"/>
    <property type="project" value="UniProtKB"/>
</dbReference>
<dbReference type="GO" id="GO:2000352">
    <property type="term" value="P:negative regulation of endothelial cell apoptotic process"/>
    <property type="evidence" value="ECO:0000250"/>
    <property type="project" value="UniProtKB"/>
</dbReference>
<dbReference type="GO" id="GO:0010719">
    <property type="term" value="P:negative regulation of epithelial to mesenchymal transition"/>
    <property type="evidence" value="ECO:0007669"/>
    <property type="project" value="Ensembl"/>
</dbReference>
<dbReference type="GO" id="GO:2000703">
    <property type="term" value="P:negative regulation of fibroblast growth factor receptor signaling pathway involved in ureteric bud formation"/>
    <property type="evidence" value="ECO:0000315"/>
    <property type="project" value="UniProtKB"/>
</dbReference>
<dbReference type="GO" id="GO:0010629">
    <property type="term" value="P:negative regulation of gene expression"/>
    <property type="evidence" value="ECO:0000315"/>
    <property type="project" value="MGI"/>
</dbReference>
<dbReference type="GO" id="GO:2000734">
    <property type="term" value="P:negative regulation of glial cell-derived neurotrophic factor receptor signaling pathway involved in ureteric bud formation"/>
    <property type="evidence" value="ECO:0000315"/>
    <property type="project" value="UniProtKB"/>
</dbReference>
<dbReference type="GO" id="GO:0050728">
    <property type="term" value="P:negative regulation of inflammatory response"/>
    <property type="evidence" value="ECO:0000250"/>
    <property type="project" value="UniProtKB"/>
</dbReference>
<dbReference type="GO" id="GO:0032703">
    <property type="term" value="P:negative regulation of interleukin-2 production"/>
    <property type="evidence" value="ECO:0000314"/>
    <property type="project" value="MGI"/>
</dbReference>
<dbReference type="GO" id="GO:0033600">
    <property type="term" value="P:negative regulation of mammary gland epithelial cell proliferation"/>
    <property type="evidence" value="ECO:0007669"/>
    <property type="project" value="Ensembl"/>
</dbReference>
<dbReference type="GO" id="GO:0000122">
    <property type="term" value="P:negative regulation of transcription by RNA polymerase II"/>
    <property type="evidence" value="ECO:0000314"/>
    <property type="project" value="MGI"/>
</dbReference>
<dbReference type="GO" id="GO:0032689">
    <property type="term" value="P:negative regulation of type II interferon production"/>
    <property type="evidence" value="ECO:0000314"/>
    <property type="project" value="MGI"/>
</dbReference>
<dbReference type="GO" id="GO:0072179">
    <property type="term" value="P:nephric duct formation"/>
    <property type="evidence" value="ECO:0000315"/>
    <property type="project" value="UniProtKB"/>
</dbReference>
<dbReference type="GO" id="GO:0072178">
    <property type="term" value="P:nephric duct morphogenesis"/>
    <property type="evidence" value="ECO:0000315"/>
    <property type="project" value="UniProtKB"/>
</dbReference>
<dbReference type="GO" id="GO:0007399">
    <property type="term" value="P:nervous system development"/>
    <property type="evidence" value="ECO:0000315"/>
    <property type="project" value="MGI"/>
</dbReference>
<dbReference type="GO" id="GO:0030182">
    <property type="term" value="P:neuron differentiation"/>
    <property type="evidence" value="ECO:0000315"/>
    <property type="project" value="MGI"/>
</dbReference>
<dbReference type="GO" id="GO:0001764">
    <property type="term" value="P:neuron migration"/>
    <property type="evidence" value="ECO:0000315"/>
    <property type="project" value="MGI"/>
</dbReference>
<dbReference type="GO" id="GO:0042421">
    <property type="term" value="P:norepinephrine biosynthetic process"/>
    <property type="evidence" value="ECO:0000315"/>
    <property type="project" value="MGI"/>
</dbReference>
<dbReference type="GO" id="GO:0071599">
    <property type="term" value="P:otic vesicle development"/>
    <property type="evidence" value="ECO:0000315"/>
    <property type="project" value="MGI"/>
</dbReference>
<dbReference type="GO" id="GO:0060017">
    <property type="term" value="P:parathyroid gland development"/>
    <property type="evidence" value="ECO:0000315"/>
    <property type="project" value="MGI"/>
</dbReference>
<dbReference type="GO" id="GO:0035898">
    <property type="term" value="P:parathyroid hormone secretion"/>
    <property type="evidence" value="ECO:0000315"/>
    <property type="project" value="MGI"/>
</dbReference>
<dbReference type="GO" id="GO:0060037">
    <property type="term" value="P:pharyngeal system development"/>
    <property type="evidence" value="ECO:0000315"/>
    <property type="project" value="UniProtKB"/>
</dbReference>
<dbReference type="GO" id="GO:0043491">
    <property type="term" value="P:phosphatidylinositol 3-kinase/protein kinase B signal transduction"/>
    <property type="evidence" value="ECO:0000315"/>
    <property type="project" value="UniProtKB"/>
</dbReference>
<dbReference type="GO" id="GO:0045597">
    <property type="term" value="P:positive regulation of cell differentiation"/>
    <property type="evidence" value="ECO:0000315"/>
    <property type="project" value="MGI"/>
</dbReference>
<dbReference type="GO" id="GO:0001819">
    <property type="term" value="P:positive regulation of cytokine production"/>
    <property type="evidence" value="ECO:0000314"/>
    <property type="project" value="MGI"/>
</dbReference>
<dbReference type="GO" id="GO:0045893">
    <property type="term" value="P:positive regulation of DNA-templated transcription"/>
    <property type="evidence" value="ECO:0000314"/>
    <property type="project" value="UniProtKB"/>
</dbReference>
<dbReference type="GO" id="GO:0010595">
    <property type="term" value="P:positive regulation of endothelial cell migration"/>
    <property type="evidence" value="ECO:0000250"/>
    <property type="project" value="UniProtKB"/>
</dbReference>
<dbReference type="GO" id="GO:0010628">
    <property type="term" value="P:positive regulation of gene expression"/>
    <property type="evidence" value="ECO:0000316"/>
    <property type="project" value="MGI"/>
</dbReference>
<dbReference type="GO" id="GO:0032736">
    <property type="term" value="P:positive regulation of interleukin-13 production"/>
    <property type="evidence" value="ECO:0000315"/>
    <property type="project" value="MGI"/>
</dbReference>
<dbReference type="GO" id="GO:0032753">
    <property type="term" value="P:positive regulation of interleukin-4 production"/>
    <property type="evidence" value="ECO:0000314"/>
    <property type="project" value="MGI"/>
</dbReference>
<dbReference type="GO" id="GO:0032754">
    <property type="term" value="P:positive regulation of interleukin-5 production"/>
    <property type="evidence" value="ECO:0000315"/>
    <property type="project" value="MGI"/>
</dbReference>
<dbReference type="GO" id="GO:1902895">
    <property type="term" value="P:positive regulation of miRNA transcription"/>
    <property type="evidence" value="ECO:0007669"/>
    <property type="project" value="Ensembl"/>
</dbReference>
<dbReference type="GO" id="GO:0051897">
    <property type="term" value="P:positive regulation of phosphatidylinositol 3-kinase/protein kinase B signal transduction"/>
    <property type="evidence" value="ECO:0000250"/>
    <property type="project" value="UniProtKB"/>
</dbReference>
<dbReference type="GO" id="GO:0009967">
    <property type="term" value="P:positive regulation of signal transduction"/>
    <property type="evidence" value="ECO:0000250"/>
    <property type="project" value="UniProtKB"/>
</dbReference>
<dbReference type="GO" id="GO:0045582">
    <property type="term" value="P:positive regulation of T cell differentiation"/>
    <property type="evidence" value="ECO:0000314"/>
    <property type="project" value="UniProtKB"/>
</dbReference>
<dbReference type="GO" id="GO:2000553">
    <property type="term" value="P:positive regulation of T-helper 2 cell cytokine production"/>
    <property type="evidence" value="ECO:0000315"/>
    <property type="project" value="MGI"/>
</dbReference>
<dbReference type="GO" id="GO:2000611">
    <property type="term" value="P:positive regulation of thyroid hormone generation"/>
    <property type="evidence" value="ECO:0000250"/>
    <property type="project" value="UniProtKB"/>
</dbReference>
<dbReference type="GO" id="GO:0045944">
    <property type="term" value="P:positive regulation of transcription by RNA polymerase II"/>
    <property type="evidence" value="ECO:0000314"/>
    <property type="project" value="MGI"/>
</dbReference>
<dbReference type="GO" id="GO:2000679">
    <property type="term" value="P:positive regulation of transcription regulatory region DNA binding"/>
    <property type="evidence" value="ECO:0000315"/>
    <property type="project" value="UniProtKB"/>
</dbReference>
<dbReference type="GO" id="GO:0072107">
    <property type="term" value="P:positive regulation of ureteric bud formation"/>
    <property type="evidence" value="ECO:0000315"/>
    <property type="project" value="UniProtKB"/>
</dbReference>
<dbReference type="GO" id="GO:0009791">
    <property type="term" value="P:post-embryonic development"/>
    <property type="evidence" value="ECO:0000315"/>
    <property type="project" value="MGI"/>
</dbReference>
<dbReference type="GO" id="GO:0002572">
    <property type="term" value="P:pro-T cell differentiation"/>
    <property type="evidence" value="ECO:0000315"/>
    <property type="project" value="MGI"/>
</dbReference>
<dbReference type="GO" id="GO:2000683">
    <property type="term" value="P:regulation of cellular response to X-ray"/>
    <property type="evidence" value="ECO:0000250"/>
    <property type="project" value="UniProtKB"/>
</dbReference>
<dbReference type="GO" id="GO:0001817">
    <property type="term" value="P:regulation of cytokine production"/>
    <property type="evidence" value="ECO:0000314"/>
    <property type="project" value="MGI"/>
</dbReference>
<dbReference type="GO" id="GO:2000114">
    <property type="term" value="P:regulation of establishment of cell polarity"/>
    <property type="evidence" value="ECO:0000314"/>
    <property type="project" value="MGI"/>
</dbReference>
<dbReference type="GO" id="GO:0072182">
    <property type="term" value="P:regulation of nephron tubule epithelial cell differentiation"/>
    <property type="evidence" value="ECO:0000315"/>
    <property type="project" value="UniProtKB"/>
</dbReference>
<dbReference type="GO" id="GO:0043523">
    <property type="term" value="P:regulation of neuron apoptotic process"/>
    <property type="evidence" value="ECO:0000315"/>
    <property type="project" value="MGI"/>
</dbReference>
<dbReference type="GO" id="GO:0010975">
    <property type="term" value="P:regulation of neuron projection development"/>
    <property type="evidence" value="ECO:0000315"/>
    <property type="project" value="MGI"/>
</dbReference>
<dbReference type="GO" id="GO:0045622">
    <property type="term" value="P:regulation of T-helper cell differentiation"/>
    <property type="evidence" value="ECO:0000315"/>
    <property type="project" value="MGI"/>
</dbReference>
<dbReference type="GO" id="GO:0006357">
    <property type="term" value="P:regulation of transcription by RNA polymerase II"/>
    <property type="evidence" value="ECO:0000314"/>
    <property type="project" value="MGI"/>
</dbReference>
<dbReference type="GO" id="GO:0043627">
    <property type="term" value="P:response to estrogen"/>
    <property type="evidence" value="ECO:0007669"/>
    <property type="project" value="Ensembl"/>
</dbReference>
<dbReference type="GO" id="GO:0045471">
    <property type="term" value="P:response to ethanol"/>
    <property type="evidence" value="ECO:0007669"/>
    <property type="project" value="Ensembl"/>
</dbReference>
<dbReference type="GO" id="GO:0010332">
    <property type="term" value="P:response to gamma radiation"/>
    <property type="evidence" value="ECO:0007669"/>
    <property type="project" value="Ensembl"/>
</dbReference>
<dbReference type="GO" id="GO:0009615">
    <property type="term" value="P:response to virus"/>
    <property type="evidence" value="ECO:0007669"/>
    <property type="project" value="Ensembl"/>
</dbReference>
<dbReference type="GO" id="GO:0009410">
    <property type="term" value="P:response to xenobiotic stimulus"/>
    <property type="evidence" value="ECO:0007669"/>
    <property type="project" value="Ensembl"/>
</dbReference>
<dbReference type="GO" id="GO:0007165">
    <property type="term" value="P:signal transduction"/>
    <property type="evidence" value="ECO:0000315"/>
    <property type="project" value="UniProtKB"/>
</dbReference>
<dbReference type="GO" id="GO:0048485">
    <property type="term" value="P:sympathetic nervous system development"/>
    <property type="evidence" value="ECO:0000315"/>
    <property type="project" value="MGI"/>
</dbReference>
<dbReference type="GO" id="GO:0030217">
    <property type="term" value="P:T cell differentiation"/>
    <property type="evidence" value="ECO:0000314"/>
    <property type="project" value="MGI"/>
</dbReference>
<dbReference type="GO" id="GO:0033077">
    <property type="term" value="P:T cell differentiation in thymus"/>
    <property type="evidence" value="ECO:0000315"/>
    <property type="project" value="MGI"/>
</dbReference>
<dbReference type="GO" id="GO:0050852">
    <property type="term" value="P:T cell receptor signaling pathway"/>
    <property type="evidence" value="ECO:0000314"/>
    <property type="project" value="UniProtKB"/>
</dbReference>
<dbReference type="GO" id="GO:0045064">
    <property type="term" value="P:T-helper 2 cell differentiation"/>
    <property type="evidence" value="ECO:0000314"/>
    <property type="project" value="MGI"/>
</dbReference>
<dbReference type="GO" id="GO:0045061">
    <property type="term" value="P:thymic T cell selection"/>
    <property type="evidence" value="ECO:0000315"/>
    <property type="project" value="MGI"/>
</dbReference>
<dbReference type="GO" id="GO:0048538">
    <property type="term" value="P:thymus development"/>
    <property type="evidence" value="ECO:0000315"/>
    <property type="project" value="MGI"/>
</dbReference>
<dbReference type="GO" id="GO:0031929">
    <property type="term" value="P:TOR signaling"/>
    <property type="evidence" value="ECO:0000315"/>
    <property type="project" value="UniProtKB"/>
</dbReference>
<dbReference type="GO" id="GO:0006366">
    <property type="term" value="P:transcription by RNA polymerase II"/>
    <property type="evidence" value="ECO:0000315"/>
    <property type="project" value="MGI"/>
</dbReference>
<dbReference type="GO" id="GO:0001806">
    <property type="term" value="P:type IV hypersensitivity"/>
    <property type="evidence" value="ECO:0007669"/>
    <property type="project" value="Ensembl"/>
</dbReference>
<dbReference type="GO" id="GO:0035799">
    <property type="term" value="P:ureter maturation"/>
    <property type="evidence" value="ECO:0000315"/>
    <property type="project" value="MGI"/>
</dbReference>
<dbReference type="GO" id="GO:0072197">
    <property type="term" value="P:ureter morphogenesis"/>
    <property type="evidence" value="ECO:0000316"/>
    <property type="project" value="MGI"/>
</dbReference>
<dbReference type="GO" id="GO:0060676">
    <property type="term" value="P:ureteric bud formation"/>
    <property type="evidence" value="ECO:0000315"/>
    <property type="project" value="UniProtKB"/>
</dbReference>
<dbReference type="GO" id="GO:0060065">
    <property type="term" value="P:uterus development"/>
    <property type="evidence" value="ECO:0000315"/>
    <property type="project" value="UniProtKB"/>
</dbReference>
<dbReference type="GO" id="GO:0003281">
    <property type="term" value="P:ventricular septum development"/>
    <property type="evidence" value="ECO:0000315"/>
    <property type="project" value="UniProtKB"/>
</dbReference>
<dbReference type="CDD" id="cd00202">
    <property type="entry name" value="ZnF_GATA"/>
    <property type="match status" value="2"/>
</dbReference>
<dbReference type="FunFam" id="3.30.50.10:FF:000001">
    <property type="entry name" value="GATA transcription factor (GATAd)"/>
    <property type="match status" value="1"/>
</dbReference>
<dbReference type="FunFam" id="3.30.50.10:FF:000032">
    <property type="entry name" value="Transcription factor GATA-3"/>
    <property type="match status" value="1"/>
</dbReference>
<dbReference type="Gene3D" id="3.30.50.10">
    <property type="entry name" value="Erythroid Transcription Factor GATA-1, subunit A"/>
    <property type="match status" value="2"/>
</dbReference>
<dbReference type="InterPro" id="IPR016374">
    <property type="entry name" value="TF_GATA-2/3"/>
</dbReference>
<dbReference type="InterPro" id="IPR039355">
    <property type="entry name" value="Transcription_factor_GATA"/>
</dbReference>
<dbReference type="InterPro" id="IPR000679">
    <property type="entry name" value="Znf_GATA"/>
</dbReference>
<dbReference type="InterPro" id="IPR013088">
    <property type="entry name" value="Znf_NHR/GATA"/>
</dbReference>
<dbReference type="PANTHER" id="PTHR10071:SF106">
    <property type="entry name" value="TRANS-ACTING T-CELL-SPECIFIC TRANSCRIPTION FACTOR GATA-3"/>
    <property type="match status" value="1"/>
</dbReference>
<dbReference type="PANTHER" id="PTHR10071">
    <property type="entry name" value="TRANSCRIPTION FACTOR GATA FAMILY MEMBER"/>
    <property type="match status" value="1"/>
</dbReference>
<dbReference type="Pfam" id="PF00320">
    <property type="entry name" value="GATA"/>
    <property type="match status" value="2"/>
</dbReference>
<dbReference type="PIRSF" id="PIRSF003027">
    <property type="entry name" value="TF_GATA-1/2/3"/>
    <property type="match status" value="1"/>
</dbReference>
<dbReference type="PRINTS" id="PR00619">
    <property type="entry name" value="GATAZNFINGER"/>
</dbReference>
<dbReference type="SMART" id="SM00401">
    <property type="entry name" value="ZnF_GATA"/>
    <property type="match status" value="2"/>
</dbReference>
<dbReference type="SUPFAM" id="SSF57716">
    <property type="entry name" value="Glucocorticoid receptor-like (DNA-binding domain)"/>
    <property type="match status" value="2"/>
</dbReference>
<dbReference type="PROSITE" id="PS00344">
    <property type="entry name" value="GATA_ZN_FINGER_1"/>
    <property type="match status" value="2"/>
</dbReference>
<dbReference type="PROSITE" id="PS50114">
    <property type="entry name" value="GATA_ZN_FINGER_2"/>
    <property type="match status" value="2"/>
</dbReference>
<feature type="chain" id="PRO_0000083409" description="Trans-acting T-cell-specific transcription factor GATA-3">
    <location>
        <begin position="1"/>
        <end position="443"/>
    </location>
</feature>
<feature type="zinc finger region" description="GATA-type 1" evidence="3">
    <location>
        <begin position="263"/>
        <end position="287"/>
    </location>
</feature>
<feature type="zinc finger region" description="GATA-type 2" evidence="3">
    <location>
        <begin position="317"/>
        <end position="341"/>
    </location>
</feature>
<feature type="region of interest" description="Interaction with TBX21" evidence="5">
    <location>
        <begin position="1"/>
        <end position="257"/>
    </location>
</feature>
<feature type="region of interest" description="Disordered" evidence="4">
    <location>
        <begin position="1"/>
        <end position="28"/>
    </location>
</feature>
<feature type="region of interest" description="Disordered" evidence="4">
    <location>
        <begin position="143"/>
        <end position="180"/>
    </location>
</feature>
<feature type="region of interest" description="Disordered" evidence="4">
    <location>
        <begin position="193"/>
        <end position="214"/>
    </location>
</feature>
<feature type="region of interest" description="Flexible linker" evidence="1">
    <location>
        <begin position="288"/>
        <end position="316"/>
    </location>
</feature>
<feature type="region of interest" description="Disordered" evidence="4">
    <location>
        <begin position="412"/>
        <end position="443"/>
    </location>
</feature>
<feature type="short sequence motif" description="YxKxHxxxRP">
    <location>
        <begin position="344"/>
        <end position="353"/>
    </location>
</feature>
<feature type="compositionally biased region" description="Polar residues" evidence="4">
    <location>
        <begin position="200"/>
        <end position="214"/>
    </location>
</feature>
<feature type="modified residue" description="Phosphoserine" evidence="2">
    <location>
        <position position="114"/>
    </location>
</feature>
<feature type="modified residue" description="Phosphoserine" evidence="12">
    <location>
        <position position="161"/>
    </location>
</feature>
<feature type="mutagenesis site" description="Dramatically decreased Th2 cell differentiation." evidence="6">
    <original>Y</original>
    <variation>A</variation>
    <location>
        <position position="344"/>
    </location>
</feature>
<feature type="mutagenesis site" description="Moderately decreased Th2 cell differentiation." evidence="6">
    <original>K</original>
    <variation>A</variation>
    <location>
        <position position="346"/>
    </location>
</feature>
<feature type="mutagenesis site" description="Dramatically decreased Th2 cell differentiation." evidence="6">
    <original>H</original>
    <variation>A</variation>
    <location>
        <position position="348"/>
    </location>
</feature>
<feature type="mutagenesis site" description="Fails to induce Th2 cytokine production." evidence="6">
    <original>R</original>
    <variation>A</variation>
    <location>
        <position position="352"/>
    </location>
</feature>
<feature type="mutagenesis site" description="Fails to induce Th2 cytokine production." evidence="6">
    <original>P</original>
    <variation>A</variation>
    <variation>K</variation>
    <location>
        <position position="353"/>
    </location>
</feature>
<feature type="turn" evidence="14">
    <location>
        <begin position="318"/>
        <end position="320"/>
    </location>
</feature>
<feature type="strand" evidence="13">
    <location>
        <begin position="326"/>
        <end position="330"/>
    </location>
</feature>
<feature type="strand" evidence="13">
    <location>
        <begin position="336"/>
        <end position="338"/>
    </location>
</feature>
<feature type="helix" evidence="14">
    <location>
        <begin position="339"/>
        <end position="348"/>
    </location>
</feature>
<feature type="helix" evidence="14">
    <location>
        <begin position="354"/>
        <end position="356"/>
    </location>
</feature>
<comment type="function">
    <text evidence="6 10 11">Transcriptional activator which binds to the enhancer of the T-cell receptor alpha and delta genes. Binds to the consensus sequence 5'-AGATAG-3'. Required for the T-helper 2 (Th2) differentiation process following immune and inflammatory responses. Positively regulates ASB2 expression (PubMed:31175139). Coordinates macrophage transcriptional activation and UCP2-dependent metabolic reprogramming in response to IL33. Upon tissue injury, acts downstream of IL33 signaling to drive differentiation of inflammation-resolving alternatively activated macrophages.</text>
</comment>
<comment type="subunit">
    <text evidence="5 8 9">Interacts with TBX21 ('Tyr-525' phosphorylated form).</text>
</comment>
<comment type="subcellular location">
    <subcellularLocation>
        <location evidence="5 11">Nucleus</location>
    </subcellularLocation>
</comment>
<comment type="tissue specificity">
    <text>T-cell specific.</text>
</comment>
<comment type="induction">
    <text evidence="11">Up-regulated during macrophage differentiation in response to IL33.</text>
</comment>
<comment type="domain">
    <text evidence="1">Binds DNA via the 2 GATA-type zinc fingers. Each zinc finger may bind either adjacent sites in a palindromic motif, or a different DNA molecule allowing looping and long-range gene regulation (By similarity).</text>
</comment>
<comment type="domain">
    <text evidence="7">The YxKxHxxxRP motif is critical for DNA-binding and function.</text>
</comment>